<keyword id="KW-0963">Cytoplasm</keyword>
<keyword id="KW-0441">Lipid A biosynthesis</keyword>
<keyword id="KW-0444">Lipid biosynthesis</keyword>
<keyword id="KW-0443">Lipid metabolism</keyword>
<keyword id="KW-0456">Lyase</keyword>
<keyword id="KW-1185">Reference proteome</keyword>
<comment type="function">
    <text evidence="1">Involved in unsaturated fatty acids biosynthesis. Catalyzes the dehydration of short chain beta-hydroxyacyl-ACPs and long chain saturated and unsaturated beta-hydroxyacyl-ACPs.</text>
</comment>
<comment type="catalytic activity">
    <reaction evidence="1">
        <text>a (3R)-hydroxyacyl-[ACP] = a (2E)-enoyl-[ACP] + H2O</text>
        <dbReference type="Rhea" id="RHEA:13097"/>
        <dbReference type="Rhea" id="RHEA-COMP:9925"/>
        <dbReference type="Rhea" id="RHEA-COMP:9945"/>
        <dbReference type="ChEBI" id="CHEBI:15377"/>
        <dbReference type="ChEBI" id="CHEBI:78784"/>
        <dbReference type="ChEBI" id="CHEBI:78827"/>
        <dbReference type="EC" id="4.2.1.59"/>
    </reaction>
</comment>
<comment type="subcellular location">
    <subcellularLocation>
        <location evidence="1">Cytoplasm</location>
    </subcellularLocation>
</comment>
<comment type="similarity">
    <text evidence="1">Belongs to the thioester dehydratase family. FabZ subfamily.</text>
</comment>
<gene>
    <name evidence="1" type="primary">fabZ</name>
    <name type="ordered locus">Jann_2451</name>
</gene>
<organism>
    <name type="scientific">Jannaschia sp. (strain CCS1)</name>
    <dbReference type="NCBI Taxonomy" id="290400"/>
    <lineage>
        <taxon>Bacteria</taxon>
        <taxon>Pseudomonadati</taxon>
        <taxon>Pseudomonadota</taxon>
        <taxon>Alphaproteobacteria</taxon>
        <taxon>Rhodobacterales</taxon>
        <taxon>Roseobacteraceae</taxon>
        <taxon>Jannaschia</taxon>
    </lineage>
</organism>
<proteinExistence type="inferred from homology"/>
<evidence type="ECO:0000255" key="1">
    <source>
        <dbReference type="HAMAP-Rule" id="MF_00406"/>
    </source>
</evidence>
<name>FABZ_JANSC</name>
<protein>
    <recommendedName>
        <fullName evidence="1">3-hydroxyacyl-[acyl-carrier-protein] dehydratase FabZ</fullName>
        <ecNumber evidence="1">4.2.1.59</ecNumber>
    </recommendedName>
    <alternativeName>
        <fullName evidence="1">(3R)-hydroxymyristoyl-[acyl-carrier-protein] dehydratase</fullName>
        <shortName evidence="1">(3R)-hydroxymyristoyl-ACP dehydrase</shortName>
    </alternativeName>
    <alternativeName>
        <fullName evidence="1">Beta-hydroxyacyl-ACP dehydratase</fullName>
    </alternativeName>
</protein>
<sequence>MTADTPTTADIDLIQRILPHRYPFLLVDRVRDIEPFKSAVGLKNVTVNEPHFQGHFPGVPIMPGVTIVEAMAQTAAVMVGVSADLADKNFLVYFMGIDSCKFRRKVGPGDVLELHVTATRGKPGAKVWKFDGRAEVDGELACECSFTAMMDLPTSPPGEAG</sequence>
<feature type="chain" id="PRO_0000242892" description="3-hydroxyacyl-[acyl-carrier-protein] dehydratase FabZ">
    <location>
        <begin position="1"/>
        <end position="161"/>
    </location>
</feature>
<feature type="active site" evidence="1">
    <location>
        <position position="55"/>
    </location>
</feature>
<dbReference type="EC" id="4.2.1.59" evidence="1"/>
<dbReference type="EMBL" id="CP000264">
    <property type="protein sequence ID" value="ABD55368.1"/>
    <property type="molecule type" value="Genomic_DNA"/>
</dbReference>
<dbReference type="RefSeq" id="WP_011455572.1">
    <property type="nucleotide sequence ID" value="NC_007802.1"/>
</dbReference>
<dbReference type="SMR" id="Q28PJ4"/>
<dbReference type="STRING" id="290400.Jann_2451"/>
<dbReference type="KEGG" id="jan:Jann_2451"/>
<dbReference type="eggNOG" id="COG0764">
    <property type="taxonomic scope" value="Bacteria"/>
</dbReference>
<dbReference type="HOGENOM" id="CLU_078912_1_0_5"/>
<dbReference type="OrthoDB" id="9772788at2"/>
<dbReference type="Proteomes" id="UP000008326">
    <property type="component" value="Chromosome"/>
</dbReference>
<dbReference type="GO" id="GO:0005737">
    <property type="term" value="C:cytoplasm"/>
    <property type="evidence" value="ECO:0007669"/>
    <property type="project" value="UniProtKB-SubCell"/>
</dbReference>
<dbReference type="GO" id="GO:0016020">
    <property type="term" value="C:membrane"/>
    <property type="evidence" value="ECO:0007669"/>
    <property type="project" value="GOC"/>
</dbReference>
<dbReference type="GO" id="GO:0019171">
    <property type="term" value="F:(3R)-hydroxyacyl-[acyl-carrier-protein] dehydratase activity"/>
    <property type="evidence" value="ECO:0007669"/>
    <property type="project" value="UniProtKB-EC"/>
</dbReference>
<dbReference type="GO" id="GO:0006633">
    <property type="term" value="P:fatty acid biosynthetic process"/>
    <property type="evidence" value="ECO:0007669"/>
    <property type="project" value="UniProtKB-UniRule"/>
</dbReference>
<dbReference type="GO" id="GO:0009245">
    <property type="term" value="P:lipid A biosynthetic process"/>
    <property type="evidence" value="ECO:0007669"/>
    <property type="project" value="UniProtKB-UniRule"/>
</dbReference>
<dbReference type="CDD" id="cd01288">
    <property type="entry name" value="FabZ"/>
    <property type="match status" value="1"/>
</dbReference>
<dbReference type="FunFam" id="3.10.129.10:FF:000001">
    <property type="entry name" value="3-hydroxyacyl-[acyl-carrier-protein] dehydratase FabZ"/>
    <property type="match status" value="1"/>
</dbReference>
<dbReference type="Gene3D" id="3.10.129.10">
    <property type="entry name" value="Hotdog Thioesterase"/>
    <property type="match status" value="1"/>
</dbReference>
<dbReference type="HAMAP" id="MF_00406">
    <property type="entry name" value="FabZ"/>
    <property type="match status" value="1"/>
</dbReference>
<dbReference type="InterPro" id="IPR013114">
    <property type="entry name" value="FabA_FabZ"/>
</dbReference>
<dbReference type="InterPro" id="IPR010084">
    <property type="entry name" value="FabZ"/>
</dbReference>
<dbReference type="InterPro" id="IPR029069">
    <property type="entry name" value="HotDog_dom_sf"/>
</dbReference>
<dbReference type="NCBIfam" id="TIGR01750">
    <property type="entry name" value="fabZ"/>
    <property type="match status" value="1"/>
</dbReference>
<dbReference type="NCBIfam" id="NF000582">
    <property type="entry name" value="PRK00006.1"/>
    <property type="match status" value="1"/>
</dbReference>
<dbReference type="PANTHER" id="PTHR30272">
    <property type="entry name" value="3-HYDROXYACYL-[ACYL-CARRIER-PROTEIN] DEHYDRATASE"/>
    <property type="match status" value="1"/>
</dbReference>
<dbReference type="PANTHER" id="PTHR30272:SF1">
    <property type="entry name" value="3-HYDROXYACYL-[ACYL-CARRIER-PROTEIN] DEHYDRATASE"/>
    <property type="match status" value="1"/>
</dbReference>
<dbReference type="Pfam" id="PF07977">
    <property type="entry name" value="FabA"/>
    <property type="match status" value="1"/>
</dbReference>
<dbReference type="SUPFAM" id="SSF54637">
    <property type="entry name" value="Thioesterase/thiol ester dehydrase-isomerase"/>
    <property type="match status" value="1"/>
</dbReference>
<reference key="1">
    <citation type="submission" date="2006-02" db="EMBL/GenBank/DDBJ databases">
        <title>Complete sequence of chromosome of Jannaschia sp. CCS1.</title>
        <authorList>
            <consortium name="US DOE Joint Genome Institute"/>
            <person name="Copeland A."/>
            <person name="Lucas S."/>
            <person name="Lapidus A."/>
            <person name="Barry K."/>
            <person name="Detter J.C."/>
            <person name="Glavina del Rio T."/>
            <person name="Hammon N."/>
            <person name="Israni S."/>
            <person name="Pitluck S."/>
            <person name="Brettin T."/>
            <person name="Bruce D."/>
            <person name="Han C."/>
            <person name="Tapia R."/>
            <person name="Gilna P."/>
            <person name="Chertkov O."/>
            <person name="Saunders E."/>
            <person name="Schmutz J."/>
            <person name="Larimer F."/>
            <person name="Land M."/>
            <person name="Kyrpides N."/>
            <person name="Lykidis A."/>
            <person name="Moran M.A."/>
            <person name="Belas R."/>
            <person name="Ye W."/>
            <person name="Buchan A."/>
            <person name="Gonzalez J.M."/>
            <person name="Schell M.A."/>
            <person name="Richardson P."/>
        </authorList>
    </citation>
    <scope>NUCLEOTIDE SEQUENCE [LARGE SCALE GENOMIC DNA]</scope>
    <source>
        <strain>CCS1</strain>
    </source>
</reference>
<accession>Q28PJ4</accession>